<accession>Q09323</accession>
<gene>
    <name type="primary">GNT</name>
</gene>
<organism>
    <name type="scientific">Lymnaea stagnalis</name>
    <name type="common">Great pond snail</name>
    <name type="synonym">Helix stagnalis</name>
    <dbReference type="NCBI Taxonomy" id="6523"/>
    <lineage>
        <taxon>Eukaryota</taxon>
        <taxon>Metazoa</taxon>
        <taxon>Spiralia</taxon>
        <taxon>Lophotrochozoa</taxon>
        <taxon>Mollusca</taxon>
        <taxon>Gastropoda</taxon>
        <taxon>Heterobranchia</taxon>
        <taxon>Euthyneura</taxon>
        <taxon>Panpulmonata</taxon>
        <taxon>Hygrophila</taxon>
        <taxon>Lymnaeoidea</taxon>
        <taxon>Lymnaeidae</taxon>
        <taxon>Lymnaea</taxon>
    </lineage>
</organism>
<keyword id="KW-0325">Glycoprotein</keyword>
<keyword id="KW-0328">Glycosyltransferase</keyword>
<keyword id="KW-0333">Golgi apparatus</keyword>
<keyword id="KW-0472">Membrane</keyword>
<keyword id="KW-0735">Signal-anchor</keyword>
<keyword id="KW-0808">Transferase</keyword>
<keyword id="KW-0812">Transmembrane</keyword>
<keyword id="KW-1133">Transmembrane helix</keyword>
<feature type="chain" id="PRO_0000080553" description="Beta-N-acetyl-D-glucosaminide beta-1,4-N-acetylglucosaminyl-transferase">
    <location>
        <begin position="1"/>
        <end position="490"/>
    </location>
</feature>
<feature type="topological domain" description="Cytoplasmic" evidence="1">
    <location>
        <begin position="1"/>
        <end position="30"/>
    </location>
</feature>
<feature type="transmembrane region" description="Helical; Signal-anchor for type II membrane protein" evidence="1">
    <location>
        <begin position="31"/>
        <end position="50"/>
    </location>
</feature>
<feature type="topological domain" description="Lumenal" evidence="1">
    <location>
        <begin position="51"/>
        <end position="490"/>
    </location>
</feature>
<feature type="glycosylation site" description="N-linked (GlcNAc...) asparagine" evidence="1">
    <location>
        <position position="51"/>
    </location>
</feature>
<feature type="glycosylation site" description="N-linked (GlcNAc...) asparagine" evidence="1">
    <location>
        <position position="82"/>
    </location>
</feature>
<feature type="glycosylation site" description="N-linked (GlcNAc...) asparagine" evidence="1">
    <location>
        <position position="441"/>
    </location>
</feature>
<feature type="glycosylation site" description="N-linked (GlcNAc...) asparagine" evidence="1">
    <location>
        <position position="459"/>
    </location>
</feature>
<feature type="glycosylation site" description="N-linked (GlcNAc...) asparagine" evidence="1">
    <location>
        <position position="485"/>
    </location>
</feature>
<name>BAGT_LYMST</name>
<proteinExistence type="evidence at transcript level"/>
<evidence type="ECO:0000255" key="1"/>
<evidence type="ECO:0000305" key="2"/>
<reference key="1">
    <citation type="journal article" date="1994" name="J. Biol. Chem.">
        <title>A Lymnaea stagnalis gene, with sequence similarity to that of mammalian beta 1--&gt;4-galactosyltransferases, encodes a novel UDP-GlcNAc:GlcNAc beta-R beta 1--&gt;4-N-acetylglucosaminyltransferase.</title>
        <authorList>
            <person name="Bakker H."/>
            <person name="Agterberg M."/>
            <person name="van Tetering A."/>
            <person name="Koeleman C.A.M."/>
            <person name="van den Eijnden D.H."/>
            <person name="van Die I."/>
        </authorList>
    </citation>
    <scope>NUCLEOTIDE SEQUENCE [MRNA]</scope>
    <source>
        <tissue>Prostate</tissue>
    </source>
</reference>
<protein>
    <recommendedName>
        <fullName>Beta-N-acetyl-D-glucosaminide beta-1,4-N-acetylglucosaminyl-transferase</fullName>
        <ecNumber>2.4.1.-</ecNumber>
    </recommendedName>
    <alternativeName>
        <fullName>Beta-1,4-GlcNAcT</fullName>
    </alternativeName>
    <alternativeName>
        <fullName>UDP-GlcNAc:GlcNAc beta-R beta-1,4-N-acetylglucosaminyl-transferase</fullName>
    </alternativeName>
</protein>
<sequence>MYLVVCWGRVTGNMISTRHCFSRCKSRSVRVIKATAMLFVAAMLFLALHMNFSHEASQQNLHRAAPISSPTTISRSTVQIRNATHDFLPASSTPMKDELIETESEFVDGFQRNEVIACSDTSEEFRTDSKRITLVNSQSGVPCPIRPPALAGRFVPSKKSSTYHELAAMFPDVQDGGHYTPRMCTPAEKTAIIIPYRNRCRHLYTLLPNLIPMLMRQNVDFTIFVIEQTTPETFNKGILFNAGYLEALKVDNYDCFILHDVDMIPIDDRNMYRCNKMGPVHFSPGVNKFKYKLFYSGLFGGVVGFTREQFRLINGASNLYFGWGGEDDDLRNRAVHMKLPLLRKTLAHGLYDMVSHVEAGWNVNPHSKGAHSLYDMLNKALGVQAGWNVHPNSKWPLRLFDSVNHAPAEGAGWNVNPDRFKIYSTSRQRQHVDGINSLVYNVTWYRTSPLYTWVGVGFNKTVITNSIPEDLRIGPEADNTYLTGNFTIIS</sequence>
<dbReference type="EC" id="2.4.1.-"/>
<dbReference type="EMBL" id="X80228">
    <property type="protein sequence ID" value="CAA56514.1"/>
    <property type="molecule type" value="mRNA"/>
</dbReference>
<dbReference type="PIR" id="A55141">
    <property type="entry name" value="A55141"/>
</dbReference>
<dbReference type="SMR" id="Q09323"/>
<dbReference type="CAZy" id="GT7">
    <property type="family name" value="Glycosyltransferase Family 7"/>
</dbReference>
<dbReference type="GlyCosmos" id="Q09323">
    <property type="glycosylation" value="5 sites, No reported glycans"/>
</dbReference>
<dbReference type="UniPathway" id="UPA00378"/>
<dbReference type="GO" id="GO:0000139">
    <property type="term" value="C:Golgi membrane"/>
    <property type="evidence" value="ECO:0007669"/>
    <property type="project" value="UniProtKB-SubCell"/>
</dbReference>
<dbReference type="GO" id="GO:0008378">
    <property type="term" value="F:galactosyltransferase activity"/>
    <property type="evidence" value="ECO:0007669"/>
    <property type="project" value="TreeGrafter"/>
</dbReference>
<dbReference type="GO" id="GO:0005975">
    <property type="term" value="P:carbohydrate metabolic process"/>
    <property type="evidence" value="ECO:0007669"/>
    <property type="project" value="InterPro"/>
</dbReference>
<dbReference type="GO" id="GO:0006486">
    <property type="term" value="P:protein glycosylation"/>
    <property type="evidence" value="ECO:0007669"/>
    <property type="project" value="UniProtKB-UniPathway"/>
</dbReference>
<dbReference type="CDD" id="cd00899">
    <property type="entry name" value="b4GalT"/>
    <property type="match status" value="1"/>
</dbReference>
<dbReference type="Gene3D" id="3.90.550.10">
    <property type="entry name" value="Spore Coat Polysaccharide Biosynthesis Protein SpsA, Chain A"/>
    <property type="match status" value="1"/>
</dbReference>
<dbReference type="InterPro" id="IPR003859">
    <property type="entry name" value="Galactosyl_T"/>
</dbReference>
<dbReference type="InterPro" id="IPR027791">
    <property type="entry name" value="Galactosyl_T_C"/>
</dbReference>
<dbReference type="InterPro" id="IPR027995">
    <property type="entry name" value="Galactosyl_T_N"/>
</dbReference>
<dbReference type="InterPro" id="IPR029044">
    <property type="entry name" value="Nucleotide-diphossugar_trans"/>
</dbReference>
<dbReference type="PANTHER" id="PTHR19300">
    <property type="entry name" value="BETA-1,4-GALACTOSYLTRANSFERASE"/>
    <property type="match status" value="1"/>
</dbReference>
<dbReference type="PANTHER" id="PTHR19300:SF57">
    <property type="entry name" value="BETA-1,4-N-ACETYLGALACTOSAMINYLTRANSFERASE"/>
    <property type="match status" value="1"/>
</dbReference>
<dbReference type="Pfam" id="PF02709">
    <property type="entry name" value="Glyco_transf_7C"/>
    <property type="match status" value="1"/>
</dbReference>
<dbReference type="Pfam" id="PF13733">
    <property type="entry name" value="Glyco_transf_7N"/>
    <property type="match status" value="1"/>
</dbReference>
<dbReference type="PRINTS" id="PR02050">
    <property type="entry name" value="B14GALTRFASE"/>
</dbReference>
<dbReference type="SUPFAM" id="SSF53448">
    <property type="entry name" value="Nucleotide-diphospho-sugar transferases"/>
    <property type="match status" value="1"/>
</dbReference>
<comment type="catalytic activity">
    <reaction>
        <text>an N-acetyl-beta-D-glucosaminyl derivative + UDP-N-acetyl-alpha-D-glucosamine = an N-acetyl-beta-D-glucosaminyl-(1-&gt;4)-N-acetyl-beta-D-glucosaminyl derivative + UDP + H(+)</text>
        <dbReference type="Rhea" id="RHEA:52816"/>
        <dbReference type="ChEBI" id="CHEBI:15378"/>
        <dbReference type="ChEBI" id="CHEBI:57705"/>
        <dbReference type="ChEBI" id="CHEBI:58223"/>
        <dbReference type="ChEBI" id="CHEBI:61631"/>
        <dbReference type="ChEBI" id="CHEBI:136857"/>
    </reaction>
</comment>
<comment type="pathway">
    <text>Protein modification; protein glycosylation.</text>
</comment>
<comment type="subcellular location">
    <subcellularLocation>
        <location>Golgi apparatus membrane</location>
        <topology>Single-pass type II membrane protein</topology>
    </subcellularLocation>
</comment>
<comment type="similarity">
    <text evidence="2">Belongs to the glycosyltransferase 7 family.</text>
</comment>